<evidence type="ECO:0000250" key="1">
    <source>
        <dbReference type="UniProtKB" id="Q8NBJ4"/>
    </source>
</evidence>
<evidence type="ECO:0000255" key="2"/>
<evidence type="ECO:0000256" key="3">
    <source>
        <dbReference type="SAM" id="MobiDB-lite"/>
    </source>
</evidence>
<evidence type="ECO:0000269" key="4">
    <source>
    </source>
</evidence>
<evidence type="ECO:0000305" key="5"/>
<organism>
    <name type="scientific">Mus musculus</name>
    <name type="common">Mouse</name>
    <dbReference type="NCBI Taxonomy" id="10090"/>
    <lineage>
        <taxon>Eukaryota</taxon>
        <taxon>Metazoa</taxon>
        <taxon>Chordata</taxon>
        <taxon>Craniata</taxon>
        <taxon>Vertebrata</taxon>
        <taxon>Euteleostomi</taxon>
        <taxon>Mammalia</taxon>
        <taxon>Eutheria</taxon>
        <taxon>Euarchontoglires</taxon>
        <taxon>Glires</taxon>
        <taxon>Rodentia</taxon>
        <taxon>Myomorpha</taxon>
        <taxon>Muroidea</taxon>
        <taxon>Muridae</taxon>
        <taxon>Murinae</taxon>
        <taxon>Mus</taxon>
        <taxon>Mus</taxon>
    </lineage>
</organism>
<feature type="chain" id="PRO_0000087553" description="Golgi membrane protein 1">
    <location>
        <begin position="1"/>
        <end position="393"/>
    </location>
</feature>
<feature type="topological domain" description="Cytoplasmic" evidence="2">
    <location>
        <begin position="1"/>
        <end position="12"/>
    </location>
</feature>
<feature type="transmembrane region" description="Helical; Signal-anchor for type II membrane protein" evidence="2">
    <location>
        <begin position="13"/>
        <end position="35"/>
    </location>
</feature>
<feature type="topological domain" description="Lumenal" evidence="2">
    <location>
        <begin position="36"/>
        <end position="393"/>
    </location>
</feature>
<feature type="region of interest" description="Disordered" evidence="3">
    <location>
        <begin position="180"/>
        <end position="247"/>
    </location>
</feature>
<feature type="region of interest" description="Disordered" evidence="3">
    <location>
        <begin position="284"/>
        <end position="352"/>
    </location>
</feature>
<feature type="coiled-coil region" evidence="2">
    <location>
        <begin position="40"/>
        <end position="183"/>
    </location>
</feature>
<feature type="compositionally biased region" description="Polar residues" evidence="3">
    <location>
        <begin position="192"/>
        <end position="201"/>
    </location>
</feature>
<feature type="compositionally biased region" description="Polar residues" evidence="3">
    <location>
        <begin position="227"/>
        <end position="247"/>
    </location>
</feature>
<feature type="compositionally biased region" description="Basic and acidic residues" evidence="3">
    <location>
        <begin position="294"/>
        <end position="320"/>
    </location>
</feature>
<feature type="compositionally biased region" description="Acidic residues" evidence="3">
    <location>
        <begin position="330"/>
        <end position="339"/>
    </location>
</feature>
<feature type="modified residue" description="N-acetylmethionine" evidence="1">
    <location>
        <position position="1"/>
    </location>
</feature>
<feature type="modified residue" description="Phosphoserine" evidence="1">
    <location>
        <position position="187"/>
    </location>
</feature>
<feature type="glycosylation site" description="N-linked (GlcNAc...) asparagine" evidence="4">
    <location>
        <position position="109"/>
    </location>
</feature>
<feature type="glycosylation site" description="N-linked (GlcNAc...) asparagine" evidence="4">
    <location>
        <position position="144"/>
    </location>
</feature>
<feature type="glycosylation site" description="N-linked (GlcNAc...) asparagine" evidence="2">
    <location>
        <position position="227"/>
    </location>
</feature>
<feature type="sequence conflict" description="In Ref. 3; AAH11152." evidence="5" ref="3">
    <original>S</original>
    <variation>A</variation>
    <location>
        <position position="319"/>
    </location>
</feature>
<comment type="function">
    <text evidence="1">Unknown. Cellular response protein to viral infection.</text>
</comment>
<comment type="subunit">
    <text evidence="1">Interacts with DYM.</text>
</comment>
<comment type="subcellular location">
    <subcellularLocation>
        <location evidence="1">Golgi apparatus</location>
        <location evidence="1">cis-Golgi network membrane</location>
        <topology evidence="1">Single-pass type II membrane protein</topology>
    </subcellularLocation>
    <text evidence="1">Early Golgi. Cycles via the cell surface and endosomes upon lumenal pH disruption.</text>
</comment>
<comment type="induction">
    <text evidence="1">Up-regulated in response to viral infection.</text>
</comment>
<comment type="PTM">
    <text evidence="1">Glycosylated.</text>
</comment>
<comment type="PTM">
    <text evidence="1">Phosphorylation sites are present in the extracellular medium.</text>
</comment>
<comment type="similarity">
    <text evidence="5">Belongs to the GOLM family.</text>
</comment>
<comment type="caution">
    <text evidence="5">It is uncertain whether Met-1 or Met-2 is the initiator.</text>
</comment>
<proteinExistence type="evidence at protein level"/>
<dbReference type="EMBL" id="AC134869">
    <property type="status" value="NOT_ANNOTATED_CDS"/>
    <property type="molecule type" value="Genomic_DNA"/>
</dbReference>
<dbReference type="EMBL" id="CH466546">
    <property type="protein sequence ID" value="EDL41283.1"/>
    <property type="molecule type" value="Genomic_DNA"/>
</dbReference>
<dbReference type="EMBL" id="CH466546">
    <property type="protein sequence ID" value="EDL41284.1"/>
    <property type="molecule type" value="Genomic_DNA"/>
</dbReference>
<dbReference type="EMBL" id="BC011152">
    <property type="protein sequence ID" value="AAH11152.1"/>
    <property type="molecule type" value="mRNA"/>
</dbReference>
<dbReference type="CCDS" id="CCDS26576.1"/>
<dbReference type="RefSeq" id="NP_001030294.1">
    <property type="nucleotide sequence ID" value="NM_001035122.2"/>
</dbReference>
<dbReference type="RefSeq" id="NP_081583.3">
    <property type="nucleotide sequence ID" value="NM_027307.4"/>
</dbReference>
<dbReference type="SMR" id="Q91XA2"/>
<dbReference type="FunCoup" id="Q91XA2">
    <property type="interactions" value="408"/>
</dbReference>
<dbReference type="STRING" id="10090.ENSMUSP00000022039"/>
<dbReference type="GlyCosmos" id="Q91XA2">
    <property type="glycosylation" value="3 sites, No reported glycans"/>
</dbReference>
<dbReference type="GlyGen" id="Q91XA2">
    <property type="glycosylation" value="3 sites, 2 N-linked glycans (2 sites)"/>
</dbReference>
<dbReference type="iPTMnet" id="Q91XA2"/>
<dbReference type="PhosphoSitePlus" id="Q91XA2"/>
<dbReference type="CPTAC" id="non-CPTAC-3916"/>
<dbReference type="jPOST" id="Q91XA2"/>
<dbReference type="PaxDb" id="10090-ENSMUSP00000093410"/>
<dbReference type="ProteomicsDB" id="271419"/>
<dbReference type="Pumba" id="Q91XA2"/>
<dbReference type="Antibodypedia" id="2449">
    <property type="antibodies" value="754 antibodies from 40 providers"/>
</dbReference>
<dbReference type="DNASU" id="105348"/>
<dbReference type="Ensembl" id="ENSMUST00000022039.7">
    <property type="protein sequence ID" value="ENSMUSP00000022039.6"/>
    <property type="gene ID" value="ENSMUSG00000021556.13"/>
</dbReference>
<dbReference type="Ensembl" id="ENSMUST00000095739.10">
    <property type="protein sequence ID" value="ENSMUSP00000093410.3"/>
    <property type="gene ID" value="ENSMUSG00000021556.13"/>
</dbReference>
<dbReference type="GeneID" id="105348"/>
<dbReference type="KEGG" id="mmu:105348"/>
<dbReference type="UCSC" id="uc007quw.1">
    <property type="organism name" value="mouse"/>
</dbReference>
<dbReference type="AGR" id="MGI:1917329"/>
<dbReference type="CTD" id="51280"/>
<dbReference type="MGI" id="MGI:1917329">
    <property type="gene designation" value="Golm1"/>
</dbReference>
<dbReference type="VEuPathDB" id="HostDB:ENSMUSG00000021556"/>
<dbReference type="eggNOG" id="ENOG502S080">
    <property type="taxonomic scope" value="Eukaryota"/>
</dbReference>
<dbReference type="GeneTree" id="ENSGT00530000063675"/>
<dbReference type="HOGENOM" id="CLU_055640_0_0_1"/>
<dbReference type="InParanoid" id="Q91XA2"/>
<dbReference type="OMA" id="DVYWFQK"/>
<dbReference type="OrthoDB" id="9947543at2759"/>
<dbReference type="TreeFam" id="TF331127"/>
<dbReference type="Reactome" id="R-MMU-381426">
    <property type="pathway name" value="Regulation of Insulin-like Growth Factor (IGF) transport and uptake by Insulin-like Growth Factor Binding Proteins (IGFBPs)"/>
</dbReference>
<dbReference type="Reactome" id="R-MMU-8957275">
    <property type="pathway name" value="Post-translational protein phosphorylation"/>
</dbReference>
<dbReference type="BioGRID-ORCS" id="105348">
    <property type="hits" value="1 hit in 79 CRISPR screens"/>
</dbReference>
<dbReference type="ChiTaRS" id="Golm1">
    <property type="organism name" value="mouse"/>
</dbReference>
<dbReference type="PRO" id="PR:Q91XA2"/>
<dbReference type="Proteomes" id="UP000000589">
    <property type="component" value="Chromosome 13"/>
</dbReference>
<dbReference type="RNAct" id="Q91XA2">
    <property type="molecule type" value="protein"/>
</dbReference>
<dbReference type="Bgee" id="ENSMUSG00000021556">
    <property type="expression patterns" value="Expressed in epithelium of stomach and 259 other cell types or tissues"/>
</dbReference>
<dbReference type="GO" id="GO:0005794">
    <property type="term" value="C:Golgi apparatus"/>
    <property type="evidence" value="ECO:0000314"/>
    <property type="project" value="MGI"/>
</dbReference>
<dbReference type="GO" id="GO:0016020">
    <property type="term" value="C:membrane"/>
    <property type="evidence" value="ECO:0007669"/>
    <property type="project" value="UniProtKB-KW"/>
</dbReference>
<dbReference type="GO" id="GO:0006997">
    <property type="term" value="P:nucleus organization"/>
    <property type="evidence" value="ECO:0000315"/>
    <property type="project" value="MGI"/>
</dbReference>
<dbReference type="GO" id="GO:0019216">
    <property type="term" value="P:regulation of lipid metabolic process"/>
    <property type="evidence" value="ECO:0000315"/>
    <property type="project" value="MGI"/>
</dbReference>
<dbReference type="Gene3D" id="1.10.287.1490">
    <property type="match status" value="1"/>
</dbReference>
<dbReference type="InterPro" id="IPR026139">
    <property type="entry name" value="GOLM1/CASC4"/>
</dbReference>
<dbReference type="PANTHER" id="PTHR15896:SF8">
    <property type="entry name" value="GOLGI MEMBRANE PROTEIN 1"/>
    <property type="match status" value="1"/>
</dbReference>
<dbReference type="PANTHER" id="PTHR15896">
    <property type="entry name" value="GOLGI PHOSPHOPROTEIN 2/GP73-RELATED"/>
    <property type="match status" value="1"/>
</dbReference>
<dbReference type="PRINTS" id="PR02084">
    <property type="entry name" value="GOLM1CASC4"/>
</dbReference>
<reference key="1">
    <citation type="journal article" date="2009" name="PLoS Biol.">
        <title>Lineage-specific biology revealed by a finished genome assembly of the mouse.</title>
        <authorList>
            <person name="Church D.M."/>
            <person name="Goodstadt L."/>
            <person name="Hillier L.W."/>
            <person name="Zody M.C."/>
            <person name="Goldstein S."/>
            <person name="She X."/>
            <person name="Bult C.J."/>
            <person name="Agarwala R."/>
            <person name="Cherry J.L."/>
            <person name="DiCuccio M."/>
            <person name="Hlavina W."/>
            <person name="Kapustin Y."/>
            <person name="Meric P."/>
            <person name="Maglott D."/>
            <person name="Birtle Z."/>
            <person name="Marques A.C."/>
            <person name="Graves T."/>
            <person name="Zhou S."/>
            <person name="Teague B."/>
            <person name="Potamousis K."/>
            <person name="Churas C."/>
            <person name="Place M."/>
            <person name="Herschleb J."/>
            <person name="Runnheim R."/>
            <person name="Forrest D."/>
            <person name="Amos-Landgraf J."/>
            <person name="Schwartz D.C."/>
            <person name="Cheng Z."/>
            <person name="Lindblad-Toh K."/>
            <person name="Eichler E.E."/>
            <person name="Ponting C.P."/>
        </authorList>
    </citation>
    <scope>NUCLEOTIDE SEQUENCE [LARGE SCALE GENOMIC DNA]</scope>
    <source>
        <strain>C57BL/6J</strain>
    </source>
</reference>
<reference key="2">
    <citation type="submission" date="2005-07" db="EMBL/GenBank/DDBJ databases">
        <authorList>
            <person name="Mural R.J."/>
            <person name="Adams M.D."/>
            <person name="Myers E.W."/>
            <person name="Smith H.O."/>
            <person name="Venter J.C."/>
        </authorList>
    </citation>
    <scope>NUCLEOTIDE SEQUENCE [LARGE SCALE GENOMIC DNA]</scope>
</reference>
<reference key="3">
    <citation type="journal article" date="2004" name="Genome Res.">
        <title>The status, quality, and expansion of the NIH full-length cDNA project: the Mammalian Gene Collection (MGC).</title>
        <authorList>
            <consortium name="The MGC Project Team"/>
        </authorList>
    </citation>
    <scope>NUCLEOTIDE SEQUENCE [LARGE SCALE MRNA]</scope>
    <source>
        <strain>FVB/N</strain>
        <tissue>Salivary gland</tissue>
    </source>
</reference>
<reference key="4">
    <citation type="journal article" date="2009" name="Nat. Biotechnol.">
        <title>Mass-spectrometric identification and relative quantification of N-linked cell surface glycoproteins.</title>
        <authorList>
            <person name="Wollscheid B."/>
            <person name="Bausch-Fluck D."/>
            <person name="Henderson C."/>
            <person name="O'Brien R."/>
            <person name="Bibel M."/>
            <person name="Schiess R."/>
            <person name="Aebersold R."/>
            <person name="Watts J.D."/>
        </authorList>
    </citation>
    <scope>GLYCOSYLATION [LARGE SCALE ANALYSIS] AT ASN-109 AND ASN-144</scope>
</reference>
<reference key="5">
    <citation type="journal article" date="2010" name="Cell">
        <title>A tissue-specific atlas of mouse protein phosphorylation and expression.</title>
        <authorList>
            <person name="Huttlin E.L."/>
            <person name="Jedrychowski M.P."/>
            <person name="Elias J.E."/>
            <person name="Goswami T."/>
            <person name="Rad R."/>
            <person name="Beausoleil S.A."/>
            <person name="Villen J."/>
            <person name="Haas W."/>
            <person name="Sowa M.E."/>
            <person name="Gygi S.P."/>
        </authorList>
    </citation>
    <scope>IDENTIFICATION BY MASS SPECTROMETRY [LARGE SCALE ANALYSIS]</scope>
    <source>
        <tissue>Lung</tissue>
        <tissue>Spleen</tissue>
    </source>
</reference>
<sequence length="393" mass="44326">MMGLGNGRRSMKSPPLILAALVACVIVLGFNYWIASSRSVELQTRIVELEGRVRRAAAERGAVELKKNEFQGELQKQREQLDRIQSSHSFQLENVNKLHQDEKAVLVNNITTGEKLIRDLQDQLKALQRSYSSLQQDIFQFQKNQTSLEKKFSYDLNQCISQMTEVKEQCDERIEEVIRKRNEAPGSRDLAETNNQHQQALKPQPKLQEEVPSEEQMPQEKGDVPRNKSQIPAPNSESLGLKPQVQNEETNEIQAVGEEHQQASIQGQAVADGTRVGAEKLDQHTQLPAGLLARPEEDSQYPEREQLVIRDRQEQQRASEEGGGQKNPGDEYDMDENEAESEREKQAALAGNDRNINVLNADAQKRGIINVPVGSERQSHILNQVGIHIPQQA</sequence>
<name>GOLM1_MOUSE</name>
<protein>
    <recommendedName>
        <fullName>Golgi membrane protein 1</fullName>
    </recommendedName>
    <alternativeName>
        <fullName>Golgi membrane protein GP73</fullName>
    </alternativeName>
    <alternativeName>
        <fullName>Golgi phosphoprotein 2</fullName>
    </alternativeName>
</protein>
<keyword id="KW-0007">Acetylation</keyword>
<keyword id="KW-0175">Coiled coil</keyword>
<keyword id="KW-0325">Glycoprotein</keyword>
<keyword id="KW-0333">Golgi apparatus</keyword>
<keyword id="KW-0472">Membrane</keyword>
<keyword id="KW-0597">Phosphoprotein</keyword>
<keyword id="KW-1185">Reference proteome</keyword>
<keyword id="KW-0735">Signal-anchor</keyword>
<keyword id="KW-0812">Transmembrane</keyword>
<keyword id="KW-1133">Transmembrane helix</keyword>
<gene>
    <name type="primary">Golm1</name>
    <name type="synonym">Golph2</name>
</gene>
<accession>Q91XA2</accession>
<accession>G3X8U4</accession>